<gene>
    <name type="primary">wnt2b-b</name>
    <name type="synonym">wnt2</name>
</gene>
<feature type="chain" id="PRO_0000200609" description="Protein Wnt-2b-B">
    <location>
        <begin position="1" status="less than"/>
        <end position="128" status="greater than"/>
    </location>
</feature>
<feature type="lipid moiety-binding region" description="O-palmitoleoyl serine; by PORCN" evidence="3">
    <location>
        <position position="8"/>
    </location>
</feature>
<feature type="glycosylation site" description="N-linked (GlcNAc...) asparagine" evidence="6">
    <location>
        <position position="48"/>
    </location>
</feature>
<feature type="disulfide bond" evidence="2">
    <location>
        <begin position="3"/>
        <end position="16"/>
    </location>
</feature>
<feature type="disulfide bond" evidence="2">
    <location>
        <begin position="5"/>
        <end position="11"/>
    </location>
</feature>
<feature type="disulfide bond" evidence="2">
    <location>
        <begin position="90"/>
        <end position="105"/>
    </location>
</feature>
<feature type="disulfide bond" evidence="2">
    <location>
        <begin position="127"/>
        <end position="128"/>
    </location>
</feature>
<feature type="non-terminal residue">
    <location>
        <position position="1"/>
    </location>
</feature>
<feature type="non-terminal residue">
    <location>
        <position position="128"/>
    </location>
</feature>
<evidence type="ECO:0000250" key="1">
    <source>
        <dbReference type="UniProtKB" id="P27467"/>
    </source>
</evidence>
<evidence type="ECO:0000250" key="2">
    <source>
        <dbReference type="UniProtKB" id="P28026"/>
    </source>
</evidence>
<evidence type="ECO:0000250" key="3">
    <source>
        <dbReference type="UniProtKB" id="P56704"/>
    </source>
</evidence>
<evidence type="ECO:0000250" key="4">
    <source>
        <dbReference type="UniProtKB" id="Q93097"/>
    </source>
</evidence>
<evidence type="ECO:0000250" key="5">
    <source>
        <dbReference type="UniProtKB" id="Q98SN7"/>
    </source>
</evidence>
<evidence type="ECO:0000255" key="6"/>
<evidence type="ECO:0000269" key="7">
    <source>
    </source>
</evidence>
<evidence type="ECO:0000305" key="8"/>
<sequence length="128" mass="14312">QECKCHVSGSCTLRTCWRALSDFRRTGDYLRRRMNGAVQVMATQDGANFTSARQGYRRATRTDLVYFDNSPDYCVLDKAAGSLGTAGRVCSKTSKGTDGCEIMCCGRGYDTTRVTRVTQCECKFHWCC</sequence>
<dbReference type="EMBL" id="L07531">
    <property type="protein sequence ID" value="AAA49984.1"/>
    <property type="molecule type" value="mRNA"/>
</dbReference>
<dbReference type="PIR" id="I51573">
    <property type="entry name" value="I51573"/>
</dbReference>
<dbReference type="SMR" id="P31283"/>
<dbReference type="GlyCosmos" id="P31283">
    <property type="glycosylation" value="1 site, No reported glycans"/>
</dbReference>
<dbReference type="Xenbase" id="XB-GENE-6252372">
    <property type="gene designation" value="wnt2b.S"/>
</dbReference>
<dbReference type="Proteomes" id="UP000186698">
    <property type="component" value="Unplaced"/>
</dbReference>
<dbReference type="GO" id="GO:0005615">
    <property type="term" value="C:extracellular space"/>
    <property type="evidence" value="ECO:0007669"/>
    <property type="project" value="TreeGrafter"/>
</dbReference>
<dbReference type="GO" id="GO:0005125">
    <property type="term" value="F:cytokine activity"/>
    <property type="evidence" value="ECO:0007669"/>
    <property type="project" value="TreeGrafter"/>
</dbReference>
<dbReference type="GO" id="GO:0005109">
    <property type="term" value="F:frizzled binding"/>
    <property type="evidence" value="ECO:0007669"/>
    <property type="project" value="TreeGrafter"/>
</dbReference>
<dbReference type="GO" id="GO:0060070">
    <property type="term" value="P:canonical Wnt signaling pathway"/>
    <property type="evidence" value="ECO:0007669"/>
    <property type="project" value="TreeGrafter"/>
</dbReference>
<dbReference type="GO" id="GO:0045165">
    <property type="term" value="P:cell fate commitment"/>
    <property type="evidence" value="ECO:0007669"/>
    <property type="project" value="TreeGrafter"/>
</dbReference>
<dbReference type="GO" id="GO:0030182">
    <property type="term" value="P:neuron differentiation"/>
    <property type="evidence" value="ECO:0007669"/>
    <property type="project" value="TreeGrafter"/>
</dbReference>
<dbReference type="FunFam" id="3.30.2460.20:FF:000001">
    <property type="entry name" value="Wnt homolog"/>
    <property type="match status" value="1"/>
</dbReference>
<dbReference type="Gene3D" id="3.30.2460.20">
    <property type="match status" value="1"/>
</dbReference>
<dbReference type="InterPro" id="IPR005817">
    <property type="entry name" value="Wnt"/>
</dbReference>
<dbReference type="InterPro" id="IPR043158">
    <property type="entry name" value="Wnt_C"/>
</dbReference>
<dbReference type="PANTHER" id="PTHR12027:SF93">
    <property type="entry name" value="PROTEIN WNT-2B"/>
    <property type="match status" value="1"/>
</dbReference>
<dbReference type="PANTHER" id="PTHR12027">
    <property type="entry name" value="WNT RELATED"/>
    <property type="match status" value="1"/>
</dbReference>
<dbReference type="Pfam" id="PF00110">
    <property type="entry name" value="wnt"/>
    <property type="match status" value="1"/>
</dbReference>
<dbReference type="PRINTS" id="PR01349">
    <property type="entry name" value="WNTPROTEIN"/>
</dbReference>
<dbReference type="SMART" id="SM00097">
    <property type="entry name" value="WNT1"/>
    <property type="match status" value="1"/>
</dbReference>
<comment type="function">
    <text evidence="5">Ligand for members of the frizzled family of seven transmembrane receptors. Functions in the canonical Wnt/beta-catenin signaling pathway.</text>
</comment>
<comment type="subcellular location">
    <subcellularLocation>
        <location evidence="4">Secreted</location>
        <location evidence="4">Extracellular space</location>
        <location evidence="4">Extracellular matrix</location>
    </subcellularLocation>
    <subcellularLocation>
        <location evidence="4">Secreted</location>
    </subcellularLocation>
</comment>
<comment type="developmental stage">
    <text evidence="7">Expressed from neurula stage onwards.</text>
</comment>
<comment type="PTM">
    <text evidence="1 3">Palmitoleoylation is required for efficient binding to frizzled receptors. Depalmitoleoylation leads to Wnt signaling pathway inhibition.</text>
</comment>
<comment type="similarity">
    <text evidence="8">Belongs to the Wnt family.</text>
</comment>
<comment type="caution">
    <text evidence="8">Originally called wnt2 by PubMed:1408135 but it is considered to be a wnt2b paralog by Xenbase.</text>
</comment>
<accession>P31283</accession>
<keyword id="KW-0217">Developmental protein</keyword>
<keyword id="KW-1015">Disulfide bond</keyword>
<keyword id="KW-0272">Extracellular matrix</keyword>
<keyword id="KW-0325">Glycoprotein</keyword>
<keyword id="KW-0449">Lipoprotein</keyword>
<keyword id="KW-1185">Reference proteome</keyword>
<keyword id="KW-0964">Secreted</keyword>
<keyword id="KW-0879">Wnt signaling pathway</keyword>
<protein>
    <recommendedName>
        <fullName>Protein Wnt-2b-B</fullName>
    </recommendedName>
    <alternativeName>
        <fullName>Protein Xwnt-2</fullName>
    </alternativeName>
</protein>
<proteinExistence type="evidence at transcript level"/>
<organism>
    <name type="scientific">Xenopus laevis</name>
    <name type="common">African clawed frog</name>
    <dbReference type="NCBI Taxonomy" id="8355"/>
    <lineage>
        <taxon>Eukaryota</taxon>
        <taxon>Metazoa</taxon>
        <taxon>Chordata</taxon>
        <taxon>Craniata</taxon>
        <taxon>Vertebrata</taxon>
        <taxon>Euteleostomi</taxon>
        <taxon>Amphibia</taxon>
        <taxon>Batrachia</taxon>
        <taxon>Anura</taxon>
        <taxon>Pipoidea</taxon>
        <taxon>Pipidae</taxon>
        <taxon>Xenopodinae</taxon>
        <taxon>Xenopus</taxon>
        <taxon>Xenopus</taxon>
    </lineage>
</organism>
<reference key="1">
    <citation type="journal article" date="1992" name="Oncogene">
        <title>Cloning and developmental expression in Xenopus laevis of seven additional members of the Wnt family.</title>
        <authorList>
            <person name="Wolda S.L."/>
            <person name="Moon R.T."/>
        </authorList>
    </citation>
    <scope>NUCLEOTIDE SEQUENCE [MRNA]</scope>
    <scope>DEVELOPMENTAL STAGE</scope>
    <source>
        <tissue>Tail bud</tissue>
    </source>
</reference>
<name>WN2BB_XENLA</name>